<keyword id="KW-0028">Amino-acid biosynthesis</keyword>
<keyword id="KW-0368">Histidine biosynthesis</keyword>
<keyword id="KW-0378">Hydrolase</keyword>
<keyword id="KW-0486">Methionine biosynthesis</keyword>
<keyword id="KW-0511">Multifunctional enzyme</keyword>
<keyword id="KW-0521">NADP</keyword>
<keyword id="KW-0554">One-carbon metabolism</keyword>
<keyword id="KW-0560">Oxidoreductase</keyword>
<keyword id="KW-0658">Purine biosynthesis</keyword>
<keyword id="KW-1185">Reference proteome</keyword>
<accession>Q8RDM4</accession>
<protein>
    <recommendedName>
        <fullName evidence="1">Bifunctional protein FolD</fullName>
    </recommendedName>
    <domain>
        <recommendedName>
            <fullName evidence="1">Methylenetetrahydrofolate dehydrogenase</fullName>
            <ecNumber evidence="1">1.5.1.5</ecNumber>
        </recommendedName>
    </domain>
    <domain>
        <recommendedName>
            <fullName evidence="1">Methenyltetrahydrofolate cyclohydrolase</fullName>
            <ecNumber evidence="1">3.5.4.9</ecNumber>
        </recommendedName>
    </domain>
</protein>
<dbReference type="EC" id="1.5.1.5" evidence="1"/>
<dbReference type="EC" id="3.5.4.9" evidence="1"/>
<dbReference type="EMBL" id="AE009951">
    <property type="protein sequence ID" value="AAL95682.1"/>
    <property type="molecule type" value="Genomic_DNA"/>
</dbReference>
<dbReference type="RefSeq" id="NP_604382.1">
    <property type="nucleotide sequence ID" value="NC_003454.1"/>
</dbReference>
<dbReference type="RefSeq" id="WP_011017190.1">
    <property type="nucleotide sequence ID" value="NZ_CP028101.1"/>
</dbReference>
<dbReference type="SMR" id="Q8RDM4"/>
<dbReference type="FunCoup" id="Q8RDM4">
    <property type="interactions" value="309"/>
</dbReference>
<dbReference type="STRING" id="190304.FN1488"/>
<dbReference type="PaxDb" id="190304-FN1488"/>
<dbReference type="EnsemblBacteria" id="AAL95682">
    <property type="protein sequence ID" value="AAL95682"/>
    <property type="gene ID" value="FN1488"/>
</dbReference>
<dbReference type="GeneID" id="79784451"/>
<dbReference type="KEGG" id="fnu:FN1488"/>
<dbReference type="PATRIC" id="fig|190304.8.peg.2048"/>
<dbReference type="eggNOG" id="COG0190">
    <property type="taxonomic scope" value="Bacteria"/>
</dbReference>
<dbReference type="HOGENOM" id="CLU_034045_2_1_0"/>
<dbReference type="InParanoid" id="Q8RDM4"/>
<dbReference type="BioCyc" id="FNUC190304:G1FZS-2056-MONOMER"/>
<dbReference type="UniPathway" id="UPA00193"/>
<dbReference type="Proteomes" id="UP000002521">
    <property type="component" value="Chromosome"/>
</dbReference>
<dbReference type="GO" id="GO:0005829">
    <property type="term" value="C:cytosol"/>
    <property type="evidence" value="ECO:0000318"/>
    <property type="project" value="GO_Central"/>
</dbReference>
<dbReference type="GO" id="GO:0004477">
    <property type="term" value="F:methenyltetrahydrofolate cyclohydrolase activity"/>
    <property type="evidence" value="ECO:0000318"/>
    <property type="project" value="GO_Central"/>
</dbReference>
<dbReference type="GO" id="GO:0004488">
    <property type="term" value="F:methylenetetrahydrofolate dehydrogenase (NADP+) activity"/>
    <property type="evidence" value="ECO:0000318"/>
    <property type="project" value="GO_Central"/>
</dbReference>
<dbReference type="GO" id="GO:0000105">
    <property type="term" value="P:L-histidine biosynthetic process"/>
    <property type="evidence" value="ECO:0007669"/>
    <property type="project" value="UniProtKB-KW"/>
</dbReference>
<dbReference type="GO" id="GO:0009086">
    <property type="term" value="P:methionine biosynthetic process"/>
    <property type="evidence" value="ECO:0007669"/>
    <property type="project" value="UniProtKB-KW"/>
</dbReference>
<dbReference type="GO" id="GO:0006164">
    <property type="term" value="P:purine nucleotide biosynthetic process"/>
    <property type="evidence" value="ECO:0007669"/>
    <property type="project" value="UniProtKB-KW"/>
</dbReference>
<dbReference type="GO" id="GO:0035999">
    <property type="term" value="P:tetrahydrofolate interconversion"/>
    <property type="evidence" value="ECO:0000318"/>
    <property type="project" value="GO_Central"/>
</dbReference>
<dbReference type="CDD" id="cd01080">
    <property type="entry name" value="NAD_bind_m-THF_DH_Cyclohyd"/>
    <property type="match status" value="1"/>
</dbReference>
<dbReference type="FunFam" id="3.40.50.720:FF:000189">
    <property type="entry name" value="Bifunctional protein FolD"/>
    <property type="match status" value="1"/>
</dbReference>
<dbReference type="FunFam" id="3.40.50.10860:FF:000005">
    <property type="entry name" value="C-1-tetrahydrofolate synthase, cytoplasmic, putative"/>
    <property type="match status" value="1"/>
</dbReference>
<dbReference type="Gene3D" id="3.40.50.10860">
    <property type="entry name" value="Leucine Dehydrogenase, chain A, domain 1"/>
    <property type="match status" value="1"/>
</dbReference>
<dbReference type="Gene3D" id="3.40.50.720">
    <property type="entry name" value="NAD(P)-binding Rossmann-like Domain"/>
    <property type="match status" value="1"/>
</dbReference>
<dbReference type="HAMAP" id="MF_01576">
    <property type="entry name" value="THF_DHG_CYH"/>
    <property type="match status" value="1"/>
</dbReference>
<dbReference type="InterPro" id="IPR046346">
    <property type="entry name" value="Aminoacid_DH-like_N_sf"/>
</dbReference>
<dbReference type="InterPro" id="IPR036291">
    <property type="entry name" value="NAD(P)-bd_dom_sf"/>
</dbReference>
<dbReference type="InterPro" id="IPR000672">
    <property type="entry name" value="THF_DH/CycHdrlase"/>
</dbReference>
<dbReference type="InterPro" id="IPR020630">
    <property type="entry name" value="THF_DH/CycHdrlase_cat_dom"/>
</dbReference>
<dbReference type="InterPro" id="IPR020631">
    <property type="entry name" value="THF_DH/CycHdrlase_NAD-bd_dom"/>
</dbReference>
<dbReference type="PANTHER" id="PTHR48099:SF5">
    <property type="entry name" value="C-1-TETRAHYDROFOLATE SYNTHASE, CYTOPLASMIC"/>
    <property type="match status" value="1"/>
</dbReference>
<dbReference type="PANTHER" id="PTHR48099">
    <property type="entry name" value="C-1-TETRAHYDROFOLATE SYNTHASE, CYTOPLASMIC-RELATED"/>
    <property type="match status" value="1"/>
</dbReference>
<dbReference type="Pfam" id="PF00763">
    <property type="entry name" value="THF_DHG_CYH"/>
    <property type="match status" value="1"/>
</dbReference>
<dbReference type="Pfam" id="PF02882">
    <property type="entry name" value="THF_DHG_CYH_C"/>
    <property type="match status" value="1"/>
</dbReference>
<dbReference type="PRINTS" id="PR00085">
    <property type="entry name" value="THFDHDRGNASE"/>
</dbReference>
<dbReference type="SUPFAM" id="SSF53223">
    <property type="entry name" value="Aminoacid dehydrogenase-like, N-terminal domain"/>
    <property type="match status" value="1"/>
</dbReference>
<dbReference type="SUPFAM" id="SSF51735">
    <property type="entry name" value="NAD(P)-binding Rossmann-fold domains"/>
    <property type="match status" value="1"/>
</dbReference>
<proteinExistence type="inferred from homology"/>
<reference key="1">
    <citation type="journal article" date="2002" name="J. Bacteriol.">
        <title>Genome sequence and analysis of the oral bacterium Fusobacterium nucleatum strain ATCC 25586.</title>
        <authorList>
            <person name="Kapatral V."/>
            <person name="Anderson I."/>
            <person name="Ivanova N."/>
            <person name="Reznik G."/>
            <person name="Los T."/>
            <person name="Lykidis A."/>
            <person name="Bhattacharyya A."/>
            <person name="Bartman A."/>
            <person name="Gardner W."/>
            <person name="Grechkin G."/>
            <person name="Zhu L."/>
            <person name="Vasieva O."/>
            <person name="Chu L."/>
            <person name="Kogan Y."/>
            <person name="Chaga O."/>
            <person name="Goltsman E."/>
            <person name="Bernal A."/>
            <person name="Larsen N."/>
            <person name="D'Souza M."/>
            <person name="Walunas T."/>
            <person name="Pusch G."/>
            <person name="Haselkorn R."/>
            <person name="Fonstein M."/>
            <person name="Kyrpides N.C."/>
            <person name="Overbeek R."/>
        </authorList>
    </citation>
    <scope>NUCLEOTIDE SEQUENCE [LARGE SCALE GENOMIC DNA]</scope>
    <source>
        <strain>ATCC 25586 / DSM 15643 / BCRC 10681 / CIP 101130 / JCM 8532 / KCTC 2640 / LMG 13131 / VPI 4355</strain>
    </source>
</reference>
<comment type="function">
    <text evidence="1">Catalyzes the oxidation of 5,10-methylenetetrahydrofolate to 5,10-methenyltetrahydrofolate and then the hydrolysis of 5,10-methenyltetrahydrofolate to 10-formyltetrahydrofolate.</text>
</comment>
<comment type="catalytic activity">
    <reaction evidence="1">
        <text>(6R)-5,10-methylene-5,6,7,8-tetrahydrofolate + NADP(+) = (6R)-5,10-methenyltetrahydrofolate + NADPH</text>
        <dbReference type="Rhea" id="RHEA:22812"/>
        <dbReference type="ChEBI" id="CHEBI:15636"/>
        <dbReference type="ChEBI" id="CHEBI:57455"/>
        <dbReference type="ChEBI" id="CHEBI:57783"/>
        <dbReference type="ChEBI" id="CHEBI:58349"/>
        <dbReference type="EC" id="1.5.1.5"/>
    </reaction>
</comment>
<comment type="catalytic activity">
    <reaction evidence="1">
        <text>(6R)-5,10-methenyltetrahydrofolate + H2O = (6R)-10-formyltetrahydrofolate + H(+)</text>
        <dbReference type="Rhea" id="RHEA:23700"/>
        <dbReference type="ChEBI" id="CHEBI:15377"/>
        <dbReference type="ChEBI" id="CHEBI:15378"/>
        <dbReference type="ChEBI" id="CHEBI:57455"/>
        <dbReference type="ChEBI" id="CHEBI:195366"/>
        <dbReference type="EC" id="3.5.4.9"/>
    </reaction>
</comment>
<comment type="pathway">
    <text evidence="1">One-carbon metabolism; tetrahydrofolate interconversion.</text>
</comment>
<comment type="subunit">
    <text evidence="1">Homodimer.</text>
</comment>
<comment type="similarity">
    <text evidence="1">Belongs to the tetrahydrofolate dehydrogenase/cyclohydrolase family.</text>
</comment>
<feature type="chain" id="PRO_0000268356" description="Bifunctional protein FolD">
    <location>
        <begin position="1"/>
        <end position="283"/>
    </location>
</feature>
<feature type="binding site" evidence="1">
    <location>
        <begin position="164"/>
        <end position="166"/>
    </location>
    <ligand>
        <name>NADP(+)</name>
        <dbReference type="ChEBI" id="CHEBI:58349"/>
    </ligand>
</feature>
<feature type="binding site" evidence="1">
    <location>
        <position position="189"/>
    </location>
    <ligand>
        <name>NADP(+)</name>
        <dbReference type="ChEBI" id="CHEBI:58349"/>
    </ligand>
</feature>
<feature type="binding site" evidence="1">
    <location>
        <position position="230"/>
    </location>
    <ligand>
        <name>NADP(+)</name>
        <dbReference type="ChEBI" id="CHEBI:58349"/>
    </ligand>
</feature>
<gene>
    <name evidence="1" type="primary">folD</name>
    <name type="ordered locus">FN1488</name>
</gene>
<name>FOLD_FUSNN</name>
<sequence length="283" mass="30601">MLMDGKELARDIKVKIKAEIDNIKKIHNINPMVATILVGDDPASQVYLNSQVKSYQDLGIGVQKYFFSEEISEAYLLNLIDKLNKDTEVDGIMINLPLPPQINATKVLNSIKLIKDVDGFKAENLGLLFQNNEGFTSPSTPAGIMALIEKYNIDLEGKDVVVVGSSNIVGKPIAALILNSRGTVTICNIYTKNLAEKTKNADILISAVGKAKLITEDMVKEGAVVIDVGINRVNGKLEGDVDFENVQKKASHITPVPGGVGALTVAMLLSNILKSFKANRGII</sequence>
<evidence type="ECO:0000255" key="1">
    <source>
        <dbReference type="HAMAP-Rule" id="MF_01576"/>
    </source>
</evidence>
<organism>
    <name type="scientific">Fusobacterium nucleatum subsp. nucleatum (strain ATCC 25586 / DSM 15643 / BCRC 10681 / CIP 101130 / JCM 8532 / KCTC 2640 / LMG 13131 / VPI 4355)</name>
    <dbReference type="NCBI Taxonomy" id="190304"/>
    <lineage>
        <taxon>Bacteria</taxon>
        <taxon>Fusobacteriati</taxon>
        <taxon>Fusobacteriota</taxon>
        <taxon>Fusobacteriia</taxon>
        <taxon>Fusobacteriales</taxon>
        <taxon>Fusobacteriaceae</taxon>
        <taxon>Fusobacterium</taxon>
    </lineage>
</organism>